<proteinExistence type="inferred from homology"/>
<keyword id="KW-0249">Electron transport</keyword>
<keyword id="KW-0349">Heme</keyword>
<keyword id="KW-0408">Iron</keyword>
<keyword id="KW-0472">Membrane</keyword>
<keyword id="KW-0479">Metal-binding</keyword>
<keyword id="KW-0496">Mitochondrion</keyword>
<keyword id="KW-0999">Mitochondrion inner membrane</keyword>
<keyword id="KW-0679">Respiratory chain</keyword>
<keyword id="KW-0812">Transmembrane</keyword>
<keyword id="KW-1133">Transmembrane helix</keyword>
<keyword id="KW-0813">Transport</keyword>
<keyword id="KW-0830">Ubiquinone</keyword>
<name>CYB_MYONI</name>
<accession>Q956Z8</accession>
<reference key="1">
    <citation type="journal article" date="2001" name="Mol. Phylogenet. Evol.">
        <title>Molecular systematics of bats of the genus Myotis (Vespertilionidae) suggests deterministic ecomorphological convergences.</title>
        <authorList>
            <person name="Ruedi M."/>
            <person name="Mayer F."/>
        </authorList>
    </citation>
    <scope>NUCLEOTIDE SEQUENCE [GENOMIC DNA]</scope>
    <source>
        <strain>Isolate MVZ AD50</strain>
    </source>
</reference>
<gene>
    <name type="primary">MT-CYB</name>
    <name type="synonym">COB</name>
    <name type="synonym">CYTB</name>
    <name type="synonym">MTCYB</name>
</gene>
<sequence length="379" mass="42712">MTNIRKSHXLVKIINSSFIDLPAPSNISSWWNFGSLLGICLALQILTGLFLAMHYTSDTATAFNSVTHICRDVNYGWVLRYLHANGASMFFICLYLHVGRGLYYGSYMYTETWNIGVILLFAVMATAFMGYVLPWGQMSFWGATVITNLLSAIPYIGTNLVEWIWGGFSVDKATLTRFFAFHFLLPFIITAMVMVHLLFLHETGSNNPTGIPANADMIPFHPYYTIKDILGLLLMITALLTLVLFSPDLLGDPDNYTPANPXNIPPHIKPEWYFLFAYAILRSIPNKLGGVLALVLSILILIIVPLLHTSKQRSMAFRPLSQCLFWLLTADLFTLTWIGGQPVEHPYIIIGQLASILYFSIIIILMPLTSLMENHLLKW</sequence>
<geneLocation type="mitochondrion"/>
<organism>
    <name type="scientific">Myotis nigricans</name>
    <name type="common">Black myotis</name>
    <dbReference type="NCBI Taxonomy" id="153286"/>
    <lineage>
        <taxon>Eukaryota</taxon>
        <taxon>Metazoa</taxon>
        <taxon>Chordata</taxon>
        <taxon>Craniata</taxon>
        <taxon>Vertebrata</taxon>
        <taxon>Euteleostomi</taxon>
        <taxon>Mammalia</taxon>
        <taxon>Eutheria</taxon>
        <taxon>Laurasiatheria</taxon>
        <taxon>Chiroptera</taxon>
        <taxon>Yangochiroptera</taxon>
        <taxon>Vespertilionidae</taxon>
        <taxon>Myotis</taxon>
    </lineage>
</organism>
<evidence type="ECO:0000250" key="1"/>
<evidence type="ECO:0000250" key="2">
    <source>
        <dbReference type="UniProtKB" id="P00157"/>
    </source>
</evidence>
<evidence type="ECO:0000255" key="3">
    <source>
        <dbReference type="PROSITE-ProRule" id="PRU00967"/>
    </source>
</evidence>
<evidence type="ECO:0000255" key="4">
    <source>
        <dbReference type="PROSITE-ProRule" id="PRU00968"/>
    </source>
</evidence>
<dbReference type="EMBL" id="AF376864">
    <property type="protein sequence ID" value="AAK57683.1"/>
    <property type="molecule type" value="Genomic_DNA"/>
</dbReference>
<dbReference type="GO" id="GO:0005743">
    <property type="term" value="C:mitochondrial inner membrane"/>
    <property type="evidence" value="ECO:0007669"/>
    <property type="project" value="UniProtKB-SubCell"/>
</dbReference>
<dbReference type="GO" id="GO:0045275">
    <property type="term" value="C:respiratory chain complex III"/>
    <property type="evidence" value="ECO:0007669"/>
    <property type="project" value="InterPro"/>
</dbReference>
<dbReference type="GO" id="GO:0046872">
    <property type="term" value="F:metal ion binding"/>
    <property type="evidence" value="ECO:0007669"/>
    <property type="project" value="UniProtKB-KW"/>
</dbReference>
<dbReference type="GO" id="GO:0008121">
    <property type="term" value="F:ubiquinol-cytochrome-c reductase activity"/>
    <property type="evidence" value="ECO:0007669"/>
    <property type="project" value="InterPro"/>
</dbReference>
<dbReference type="GO" id="GO:0006122">
    <property type="term" value="P:mitochondrial electron transport, ubiquinol to cytochrome c"/>
    <property type="evidence" value="ECO:0007669"/>
    <property type="project" value="TreeGrafter"/>
</dbReference>
<dbReference type="CDD" id="cd00290">
    <property type="entry name" value="cytochrome_b_C"/>
    <property type="match status" value="1"/>
</dbReference>
<dbReference type="CDD" id="cd00284">
    <property type="entry name" value="Cytochrome_b_N"/>
    <property type="match status" value="1"/>
</dbReference>
<dbReference type="FunFam" id="1.20.810.10:FF:000002">
    <property type="entry name" value="Cytochrome b"/>
    <property type="match status" value="1"/>
</dbReference>
<dbReference type="Gene3D" id="1.20.810.10">
    <property type="entry name" value="Cytochrome Bc1 Complex, Chain C"/>
    <property type="match status" value="1"/>
</dbReference>
<dbReference type="InterPro" id="IPR005798">
    <property type="entry name" value="Cyt_b/b6_C"/>
</dbReference>
<dbReference type="InterPro" id="IPR036150">
    <property type="entry name" value="Cyt_b/b6_C_sf"/>
</dbReference>
<dbReference type="InterPro" id="IPR005797">
    <property type="entry name" value="Cyt_b/b6_N"/>
</dbReference>
<dbReference type="InterPro" id="IPR027387">
    <property type="entry name" value="Cytb/b6-like_sf"/>
</dbReference>
<dbReference type="InterPro" id="IPR030689">
    <property type="entry name" value="Cytochrome_b"/>
</dbReference>
<dbReference type="InterPro" id="IPR048260">
    <property type="entry name" value="Cytochrome_b_C_euk/bac"/>
</dbReference>
<dbReference type="InterPro" id="IPR048259">
    <property type="entry name" value="Cytochrome_b_N_euk/bac"/>
</dbReference>
<dbReference type="InterPro" id="IPR016174">
    <property type="entry name" value="Di-haem_cyt_TM"/>
</dbReference>
<dbReference type="PANTHER" id="PTHR19271">
    <property type="entry name" value="CYTOCHROME B"/>
    <property type="match status" value="1"/>
</dbReference>
<dbReference type="PANTHER" id="PTHR19271:SF16">
    <property type="entry name" value="CYTOCHROME B"/>
    <property type="match status" value="1"/>
</dbReference>
<dbReference type="Pfam" id="PF00032">
    <property type="entry name" value="Cytochrom_B_C"/>
    <property type="match status" value="1"/>
</dbReference>
<dbReference type="Pfam" id="PF00033">
    <property type="entry name" value="Cytochrome_B"/>
    <property type="match status" value="1"/>
</dbReference>
<dbReference type="PIRSF" id="PIRSF038885">
    <property type="entry name" value="COB"/>
    <property type="match status" value="1"/>
</dbReference>
<dbReference type="SUPFAM" id="SSF81648">
    <property type="entry name" value="a domain/subunit of cytochrome bc1 complex (Ubiquinol-cytochrome c reductase)"/>
    <property type="match status" value="1"/>
</dbReference>
<dbReference type="SUPFAM" id="SSF81342">
    <property type="entry name" value="Transmembrane di-heme cytochromes"/>
    <property type="match status" value="1"/>
</dbReference>
<dbReference type="PROSITE" id="PS51003">
    <property type="entry name" value="CYTB_CTER"/>
    <property type="match status" value="1"/>
</dbReference>
<dbReference type="PROSITE" id="PS51002">
    <property type="entry name" value="CYTB_NTER"/>
    <property type="match status" value="1"/>
</dbReference>
<feature type="chain" id="PRO_0000061249" description="Cytochrome b">
    <location>
        <begin position="1"/>
        <end position="379"/>
    </location>
</feature>
<feature type="transmembrane region" description="Helical" evidence="2">
    <location>
        <begin position="33"/>
        <end position="53"/>
    </location>
</feature>
<feature type="transmembrane region" description="Helical" evidence="2">
    <location>
        <begin position="77"/>
        <end position="98"/>
    </location>
</feature>
<feature type="transmembrane region" description="Helical" evidence="2">
    <location>
        <begin position="113"/>
        <end position="133"/>
    </location>
</feature>
<feature type="transmembrane region" description="Helical" evidence="2">
    <location>
        <begin position="178"/>
        <end position="198"/>
    </location>
</feature>
<feature type="transmembrane region" description="Helical" evidence="2">
    <location>
        <begin position="226"/>
        <end position="246"/>
    </location>
</feature>
<feature type="transmembrane region" description="Helical" evidence="2">
    <location>
        <begin position="288"/>
        <end position="308"/>
    </location>
</feature>
<feature type="transmembrane region" description="Helical" evidence="2">
    <location>
        <begin position="320"/>
        <end position="340"/>
    </location>
</feature>
<feature type="transmembrane region" description="Helical" evidence="2">
    <location>
        <begin position="347"/>
        <end position="367"/>
    </location>
</feature>
<feature type="binding site" description="axial binding residue" evidence="2">
    <location>
        <position position="83"/>
    </location>
    <ligand>
        <name>heme b</name>
        <dbReference type="ChEBI" id="CHEBI:60344"/>
        <label>b562</label>
    </ligand>
    <ligandPart>
        <name>Fe</name>
        <dbReference type="ChEBI" id="CHEBI:18248"/>
    </ligandPart>
</feature>
<feature type="binding site" description="axial binding residue" evidence="2">
    <location>
        <position position="97"/>
    </location>
    <ligand>
        <name>heme b</name>
        <dbReference type="ChEBI" id="CHEBI:60344"/>
        <label>b566</label>
    </ligand>
    <ligandPart>
        <name>Fe</name>
        <dbReference type="ChEBI" id="CHEBI:18248"/>
    </ligandPart>
</feature>
<feature type="binding site" description="axial binding residue" evidence="2">
    <location>
        <position position="182"/>
    </location>
    <ligand>
        <name>heme b</name>
        <dbReference type="ChEBI" id="CHEBI:60344"/>
        <label>b562</label>
    </ligand>
    <ligandPart>
        <name>Fe</name>
        <dbReference type="ChEBI" id="CHEBI:18248"/>
    </ligandPart>
</feature>
<feature type="binding site" description="axial binding residue" evidence="2">
    <location>
        <position position="196"/>
    </location>
    <ligand>
        <name>heme b</name>
        <dbReference type="ChEBI" id="CHEBI:60344"/>
        <label>b566</label>
    </ligand>
    <ligandPart>
        <name>Fe</name>
        <dbReference type="ChEBI" id="CHEBI:18248"/>
    </ligandPart>
</feature>
<feature type="binding site" evidence="2">
    <location>
        <position position="201"/>
    </location>
    <ligand>
        <name>a ubiquinone</name>
        <dbReference type="ChEBI" id="CHEBI:16389"/>
    </ligand>
</feature>
<protein>
    <recommendedName>
        <fullName>Cytochrome b</fullName>
    </recommendedName>
    <alternativeName>
        <fullName>Complex III subunit 3</fullName>
    </alternativeName>
    <alternativeName>
        <fullName>Complex III subunit III</fullName>
    </alternativeName>
    <alternativeName>
        <fullName>Cytochrome b-c1 complex subunit 3</fullName>
    </alternativeName>
    <alternativeName>
        <fullName>Ubiquinol-cytochrome-c reductase complex cytochrome b subunit</fullName>
    </alternativeName>
</protein>
<comment type="function">
    <text evidence="2">Component of the ubiquinol-cytochrome c reductase complex (complex III or cytochrome b-c1 complex) that is part of the mitochondrial respiratory chain. The b-c1 complex mediates electron transfer from ubiquinol to cytochrome c. Contributes to the generation of a proton gradient across the mitochondrial membrane that is then used for ATP synthesis.</text>
</comment>
<comment type="cofactor">
    <cofactor evidence="2">
        <name>heme b</name>
        <dbReference type="ChEBI" id="CHEBI:60344"/>
    </cofactor>
    <text evidence="2">Binds 2 heme b groups non-covalently.</text>
</comment>
<comment type="subunit">
    <text evidence="2">The cytochrome bc1 complex contains 11 subunits: 3 respiratory subunits (MT-CYB, CYC1 and UQCRFS1), 2 core proteins (UQCRC1 and UQCRC2) and 6 low-molecular weight proteins (UQCRH/QCR6, UQCRB/QCR7, UQCRQ/QCR8, UQCR10/QCR9, UQCR11/QCR10 and a cleavage product of UQCRFS1). This cytochrome bc1 complex then forms a dimer.</text>
</comment>
<comment type="subcellular location">
    <subcellularLocation>
        <location evidence="2">Mitochondrion inner membrane</location>
        <topology evidence="2">Multi-pass membrane protein</topology>
    </subcellularLocation>
</comment>
<comment type="miscellaneous">
    <text evidence="1">Heme 1 (or BL or b562) is low-potential and absorbs at about 562 nm, and heme 2 (or BH or b566) is high-potential and absorbs at about 566 nm.</text>
</comment>
<comment type="similarity">
    <text evidence="3 4">Belongs to the cytochrome b family.</text>
</comment>
<comment type="caution">
    <text evidence="2">The full-length protein contains only eight transmembrane helices, not nine as predicted by bioinformatics tools.</text>
</comment>